<comment type="function">
    <text evidence="1 2">Actin-depolymerizing protein. Severs actin filaments (F-actin) and binds to actin monomers (G-actin). Acts in a pH-independent manner.</text>
</comment>
<comment type="tissue specificity">
    <text>Widely distributed in various tissues.</text>
</comment>
<comment type="PTM">
    <text evidence="1">ISGylated.</text>
</comment>
<comment type="similarity">
    <text evidence="5">Belongs to the actin-binding proteins ADF family.</text>
</comment>
<proteinExistence type="evidence at protein level"/>
<name>DEST_PIG</name>
<reference key="1">
    <citation type="journal article" date="1990" name="J. Biol. Chem.">
        <title>Destrin, a mammalian actin-depolymerizing protein, is closely related to cofilin. Cloning and expression of porcine brain destrin cDNA.</title>
        <authorList>
            <person name="Moriyama K."/>
            <person name="Nishida E."/>
            <person name="Yonezawa N."/>
            <person name="Sakai H."/>
            <person name="Matsumoto S."/>
            <person name="Iida K."/>
            <person name="Yahara I."/>
        </authorList>
    </citation>
    <scope>NUCLEOTIDE SEQUENCE [MRNA]</scope>
    <scope>PROTEIN SEQUENCE OF 53-69 AND 96-112</scope>
    <source>
        <tissue>Brain</tissue>
    </source>
</reference>
<reference key="2">
    <citation type="journal article" date="1996" name="Cell">
        <title>Tertiary structure of destrin and structural similarity between two actin-regulating protein families.</title>
        <authorList>
            <person name="Hatanaka H."/>
            <person name="Ogura K."/>
            <person name="Moriyama K."/>
            <person name="Ichikawa S."/>
            <person name="Yahara I."/>
            <person name="Inagaki F."/>
        </authorList>
    </citation>
    <scope>STRUCTURE BY NMR</scope>
</reference>
<dbReference type="EMBL" id="D90053">
    <property type="protein sequence ID" value="BAA14105.1"/>
    <property type="molecule type" value="mRNA"/>
</dbReference>
<dbReference type="PIR" id="A35179">
    <property type="entry name" value="A35179"/>
</dbReference>
<dbReference type="RefSeq" id="NP_001004031.1">
    <property type="nucleotide sequence ID" value="NM_001004031.1"/>
</dbReference>
<dbReference type="PDB" id="1AK6">
    <property type="method" value="NMR"/>
    <property type="chains" value="A=2-165"/>
</dbReference>
<dbReference type="PDB" id="1AK7">
    <property type="method" value="NMR"/>
    <property type="chains" value="A=2-165"/>
</dbReference>
<dbReference type="PDBsum" id="1AK6"/>
<dbReference type="PDBsum" id="1AK7"/>
<dbReference type="SMR" id="P60982"/>
<dbReference type="FunCoup" id="P60982">
    <property type="interactions" value="1222"/>
</dbReference>
<dbReference type="STRING" id="9823.ENSSSCP00000074017"/>
<dbReference type="PaxDb" id="9823-ENSSSCP00000007548"/>
<dbReference type="PeptideAtlas" id="P60982"/>
<dbReference type="Ensembl" id="ENSSSCT00025099547.1">
    <property type="protein sequence ID" value="ENSSSCP00025043847.1"/>
    <property type="gene ID" value="ENSSSCG00025072367.1"/>
</dbReference>
<dbReference type="Ensembl" id="ENSSSCT00030053720.1">
    <property type="protein sequence ID" value="ENSSSCP00030024522.1"/>
    <property type="gene ID" value="ENSSSCG00030038598.1"/>
</dbReference>
<dbReference type="Ensembl" id="ENSSSCT00035010647.1">
    <property type="protein sequence ID" value="ENSSSCP00035003619.1"/>
    <property type="gene ID" value="ENSSSCG00035008527.1"/>
</dbReference>
<dbReference type="Ensembl" id="ENSSSCT00040077141.1">
    <property type="protein sequence ID" value="ENSSSCP00040033147.1"/>
    <property type="gene ID" value="ENSSSCG00040056908.1"/>
</dbReference>
<dbReference type="Ensembl" id="ENSSSCT00045048344.1">
    <property type="protein sequence ID" value="ENSSSCP00045033606.1"/>
    <property type="gene ID" value="ENSSSCG00045028358.1"/>
</dbReference>
<dbReference type="Ensembl" id="ENSSSCT00060014441.1">
    <property type="protein sequence ID" value="ENSSSCP00060005600.1"/>
    <property type="gene ID" value="ENSSSCG00060011069.1"/>
</dbReference>
<dbReference type="Ensembl" id="ENSSSCT00090014184">
    <property type="protein sequence ID" value="ENSSSCP00090008980"/>
    <property type="gene ID" value="ENSSSCG00090007966"/>
</dbReference>
<dbReference type="GeneID" id="445516"/>
<dbReference type="KEGG" id="ssc:445516"/>
<dbReference type="CTD" id="11034"/>
<dbReference type="eggNOG" id="KOG1735">
    <property type="taxonomic scope" value="Eukaryota"/>
</dbReference>
<dbReference type="HOGENOM" id="CLU_094004_0_0_1"/>
<dbReference type="InParanoid" id="P60982"/>
<dbReference type="OMA" id="ITFYSWS"/>
<dbReference type="OrthoDB" id="10249245at2759"/>
<dbReference type="EvolutionaryTrace" id="P60982"/>
<dbReference type="Proteomes" id="UP000008227">
    <property type="component" value="Unplaced"/>
</dbReference>
<dbReference type="Proteomes" id="UP000314985">
    <property type="component" value="Unplaced"/>
</dbReference>
<dbReference type="Proteomes" id="UP000694570">
    <property type="component" value="Unplaced"/>
</dbReference>
<dbReference type="Proteomes" id="UP000694571">
    <property type="component" value="Unplaced"/>
</dbReference>
<dbReference type="Proteomes" id="UP000694720">
    <property type="component" value="Unplaced"/>
</dbReference>
<dbReference type="Proteomes" id="UP000694722">
    <property type="component" value="Unplaced"/>
</dbReference>
<dbReference type="Proteomes" id="UP000694723">
    <property type="component" value="Unplaced"/>
</dbReference>
<dbReference type="Proteomes" id="UP000694724">
    <property type="component" value="Unplaced"/>
</dbReference>
<dbReference type="Proteomes" id="UP000694725">
    <property type="component" value="Unplaced"/>
</dbReference>
<dbReference type="Proteomes" id="UP000694726">
    <property type="component" value="Unplaced"/>
</dbReference>
<dbReference type="Proteomes" id="UP000694727">
    <property type="component" value="Unplaced"/>
</dbReference>
<dbReference type="Proteomes" id="UP000694728">
    <property type="component" value="Unplaced"/>
</dbReference>
<dbReference type="Bgee" id="ENSSSCG00000007085">
    <property type="expression patterns" value="Expressed in oocyte and 46 other cell types or tissues"/>
</dbReference>
<dbReference type="ExpressionAtlas" id="P60982">
    <property type="expression patterns" value="baseline and differential"/>
</dbReference>
<dbReference type="GO" id="GO:0015629">
    <property type="term" value="C:actin cytoskeleton"/>
    <property type="evidence" value="ECO:0000318"/>
    <property type="project" value="GO_Central"/>
</dbReference>
<dbReference type="GO" id="GO:0030864">
    <property type="term" value="C:cortical actin cytoskeleton"/>
    <property type="evidence" value="ECO:0000250"/>
    <property type="project" value="AgBase"/>
</dbReference>
<dbReference type="GO" id="GO:0005737">
    <property type="term" value="C:cytoplasm"/>
    <property type="evidence" value="ECO:0000250"/>
    <property type="project" value="AgBase"/>
</dbReference>
<dbReference type="GO" id="GO:0051015">
    <property type="term" value="F:actin filament binding"/>
    <property type="evidence" value="ECO:0000318"/>
    <property type="project" value="GO_Central"/>
</dbReference>
<dbReference type="GO" id="GO:0030043">
    <property type="term" value="P:actin filament fragmentation"/>
    <property type="evidence" value="ECO:0000318"/>
    <property type="project" value="GO_Central"/>
</dbReference>
<dbReference type="GO" id="GO:0051014">
    <property type="term" value="P:actin filament severing"/>
    <property type="evidence" value="ECO:0000318"/>
    <property type="project" value="GO_Central"/>
</dbReference>
<dbReference type="GO" id="GO:0030836">
    <property type="term" value="P:positive regulation of actin filament depolymerization"/>
    <property type="evidence" value="ECO:0000250"/>
    <property type="project" value="AgBase"/>
</dbReference>
<dbReference type="CDD" id="cd11286">
    <property type="entry name" value="ADF_cofilin_like"/>
    <property type="match status" value="1"/>
</dbReference>
<dbReference type="FunFam" id="3.40.20.10:FF:000010">
    <property type="entry name" value="Putative destrin"/>
    <property type="match status" value="1"/>
</dbReference>
<dbReference type="Gene3D" id="3.40.20.10">
    <property type="entry name" value="Severin"/>
    <property type="match status" value="1"/>
</dbReference>
<dbReference type="InterPro" id="IPR002108">
    <property type="entry name" value="ADF-H"/>
</dbReference>
<dbReference type="InterPro" id="IPR029006">
    <property type="entry name" value="ADF-H/Gelsolin-like_dom_sf"/>
</dbReference>
<dbReference type="InterPro" id="IPR017904">
    <property type="entry name" value="ADF/Cofilin"/>
</dbReference>
<dbReference type="PANTHER" id="PTHR11913">
    <property type="entry name" value="COFILIN-RELATED"/>
    <property type="match status" value="1"/>
</dbReference>
<dbReference type="Pfam" id="PF00241">
    <property type="entry name" value="Cofilin_ADF"/>
    <property type="match status" value="1"/>
</dbReference>
<dbReference type="PRINTS" id="PR00006">
    <property type="entry name" value="COFILIN"/>
</dbReference>
<dbReference type="SMART" id="SM00102">
    <property type="entry name" value="ADF"/>
    <property type="match status" value="1"/>
</dbReference>
<dbReference type="SUPFAM" id="SSF55753">
    <property type="entry name" value="Actin depolymerizing proteins"/>
    <property type="match status" value="1"/>
</dbReference>
<dbReference type="PROSITE" id="PS51263">
    <property type="entry name" value="ADF_H"/>
    <property type="match status" value="1"/>
</dbReference>
<protein>
    <recommendedName>
        <fullName>Destrin</fullName>
    </recommendedName>
    <alternativeName>
        <fullName>Actin-depolymerizing factor</fullName>
        <shortName>ADF</shortName>
    </alternativeName>
</protein>
<accession>P60982</accession>
<accession>P18282</accession>
<keyword id="KW-0002">3D-structure</keyword>
<keyword id="KW-0007">Acetylation</keyword>
<keyword id="KW-0009">Actin-binding</keyword>
<keyword id="KW-0903">Direct protein sequencing</keyword>
<keyword id="KW-0597">Phosphoprotein</keyword>
<keyword id="KW-1185">Reference proteome</keyword>
<keyword id="KW-0832">Ubl conjugation</keyword>
<sequence>MASGVQVADEVCRIFYDMKVRKCSTPEEIKKRKKAVIFCLSADKKCIIVEEGKEILVGDVGVTITDPFKHFVGMLPEKDCRYALYDASFETKESRKEELMFFLWAPELAPLKSKMIYASSKDAIKKKFQGIKHECQANGPEDLNRACIAEKLGGSLIVAFEGCPV</sequence>
<gene>
    <name type="primary">DSTN</name>
    <name type="synonym">DSN</name>
</gene>
<feature type="initiator methionine" description="Removed" evidence="1">
    <location>
        <position position="1"/>
    </location>
</feature>
<feature type="chain" id="PRO_0000214920" description="Destrin">
    <location>
        <begin position="2"/>
        <end position="165"/>
    </location>
</feature>
<feature type="domain" description="ADF-H" evidence="4">
    <location>
        <begin position="4"/>
        <end position="153"/>
    </location>
</feature>
<feature type="short sequence motif" description="Nuclear localization signal" evidence="3">
    <location>
        <begin position="30"/>
        <end position="34"/>
    </location>
</feature>
<feature type="modified residue" description="N-acetylalanine" evidence="1">
    <location>
        <position position="2"/>
    </location>
</feature>
<feature type="modified residue" description="Phosphoserine" evidence="1">
    <location>
        <position position="3"/>
    </location>
</feature>
<feature type="modified residue" description="N6-acetyllysine" evidence="1">
    <location>
        <position position="19"/>
    </location>
</feature>
<feature type="helix" evidence="6">
    <location>
        <begin position="10"/>
        <end position="17"/>
    </location>
</feature>
<feature type="strand" evidence="6">
    <location>
        <begin position="19"/>
        <end position="21"/>
    </location>
</feature>
<feature type="helix" evidence="6">
    <location>
        <begin position="26"/>
        <end position="29"/>
    </location>
</feature>
<feature type="helix" evidence="6">
    <location>
        <begin position="30"/>
        <end position="32"/>
    </location>
</feature>
<feature type="strand" evidence="7">
    <location>
        <begin position="35"/>
        <end position="38"/>
    </location>
</feature>
<feature type="strand" evidence="7">
    <location>
        <begin position="42"/>
        <end position="44"/>
    </location>
</feature>
<feature type="strand" evidence="6">
    <location>
        <begin position="57"/>
        <end position="59"/>
    </location>
</feature>
<feature type="turn" evidence="6">
    <location>
        <begin position="60"/>
        <end position="63"/>
    </location>
</feature>
<feature type="strand" evidence="6">
    <location>
        <begin position="66"/>
        <end position="68"/>
    </location>
</feature>
<feature type="helix" evidence="6">
    <location>
        <begin position="69"/>
        <end position="73"/>
    </location>
</feature>
<feature type="strand" evidence="7">
    <location>
        <begin position="77"/>
        <end position="79"/>
    </location>
</feature>
<feature type="strand" evidence="7">
    <location>
        <begin position="82"/>
        <end position="85"/>
    </location>
</feature>
<feature type="strand" evidence="7">
    <location>
        <begin position="91"/>
        <end position="93"/>
    </location>
</feature>
<feature type="strand" evidence="6">
    <location>
        <begin position="101"/>
        <end position="104"/>
    </location>
</feature>
<feature type="strand" evidence="6">
    <location>
        <begin position="107"/>
        <end position="109"/>
    </location>
</feature>
<feature type="helix" evidence="6">
    <location>
        <begin position="111"/>
        <end position="115"/>
    </location>
</feature>
<feature type="helix" evidence="6">
    <location>
        <begin position="117"/>
        <end position="127"/>
    </location>
</feature>
<feature type="strand" evidence="6">
    <location>
        <begin position="135"/>
        <end position="139"/>
    </location>
</feature>
<feature type="turn" evidence="6">
    <location>
        <begin position="140"/>
        <end position="143"/>
    </location>
</feature>
<feature type="helix" evidence="6">
    <location>
        <begin position="145"/>
        <end position="151"/>
    </location>
</feature>
<feature type="turn" evidence="6">
    <location>
        <begin position="152"/>
        <end position="155"/>
    </location>
</feature>
<feature type="strand" evidence="7">
    <location>
        <begin position="156"/>
        <end position="158"/>
    </location>
</feature>
<feature type="turn" evidence="6">
    <location>
        <begin position="159"/>
        <end position="162"/>
    </location>
</feature>
<organism>
    <name type="scientific">Sus scrofa</name>
    <name type="common">Pig</name>
    <dbReference type="NCBI Taxonomy" id="9823"/>
    <lineage>
        <taxon>Eukaryota</taxon>
        <taxon>Metazoa</taxon>
        <taxon>Chordata</taxon>
        <taxon>Craniata</taxon>
        <taxon>Vertebrata</taxon>
        <taxon>Euteleostomi</taxon>
        <taxon>Mammalia</taxon>
        <taxon>Eutheria</taxon>
        <taxon>Laurasiatheria</taxon>
        <taxon>Artiodactyla</taxon>
        <taxon>Suina</taxon>
        <taxon>Suidae</taxon>
        <taxon>Sus</taxon>
    </lineage>
</organism>
<evidence type="ECO:0000250" key="1">
    <source>
        <dbReference type="UniProtKB" id="P60981"/>
    </source>
</evidence>
<evidence type="ECO:0000250" key="2">
    <source>
        <dbReference type="UniProtKB" id="Q9R0P5"/>
    </source>
</evidence>
<evidence type="ECO:0000255" key="3"/>
<evidence type="ECO:0000255" key="4">
    <source>
        <dbReference type="PROSITE-ProRule" id="PRU00599"/>
    </source>
</evidence>
<evidence type="ECO:0000305" key="5"/>
<evidence type="ECO:0007829" key="6">
    <source>
        <dbReference type="PDB" id="1AK6"/>
    </source>
</evidence>
<evidence type="ECO:0007829" key="7">
    <source>
        <dbReference type="PDB" id="1AK7"/>
    </source>
</evidence>